<sequence>MSMTPREIVHELNRHIIGQDDAKRAVAIALRNRWRRMQLPEELRVEVTPKNILMIGPTGVGKTEIARRLAKLANAPFIKVEATKFTEVGYVGRDVESIIRDLADAAIKLLREQEIVKVRHRAEDAAEDRILDALLPPARVGFNEDPAQSNDSNTRQLFRKRLREGQLDDKEIEIEINEAVGVDISAPPGMEEMTNQLQSLFANMGKGKTKSRKLKVKEALKLVREEEAGRLVNDEELKVKALEAVEQHGIVFIDEIDKVAKRGNSGGVDVSREGVQRDLLPLIEGCTVNTKLGMVKTDHILFIASGAFHLSKPSDLVPELQGRLPIRVELKALSPQDFERILTEPHASLTEQYRELLKTEGLKIEFKPDGIKRLAEIAWQVNEKTENIGARRLHTLLERLLEEVSFSAGDLAISPDAAPIEIDADYVNSHLGDLAENEDLSRYIL</sequence>
<accession>Q87V00</accession>
<keyword id="KW-0067">ATP-binding</keyword>
<keyword id="KW-0143">Chaperone</keyword>
<keyword id="KW-0963">Cytoplasm</keyword>
<keyword id="KW-0547">Nucleotide-binding</keyword>
<keyword id="KW-1185">Reference proteome</keyword>
<feature type="chain" id="PRO_0000160533" description="ATP-dependent protease ATPase subunit HslU">
    <location>
        <begin position="1"/>
        <end position="445"/>
    </location>
</feature>
<feature type="binding site" evidence="1">
    <location>
        <position position="17"/>
    </location>
    <ligand>
        <name>ATP</name>
        <dbReference type="ChEBI" id="CHEBI:30616"/>
    </ligand>
</feature>
<feature type="binding site" evidence="1">
    <location>
        <begin position="59"/>
        <end position="64"/>
    </location>
    <ligand>
        <name>ATP</name>
        <dbReference type="ChEBI" id="CHEBI:30616"/>
    </ligand>
</feature>
<feature type="binding site" evidence="1">
    <location>
        <position position="254"/>
    </location>
    <ligand>
        <name>ATP</name>
        <dbReference type="ChEBI" id="CHEBI:30616"/>
    </ligand>
</feature>
<feature type="binding site" evidence="1">
    <location>
        <position position="319"/>
    </location>
    <ligand>
        <name>ATP</name>
        <dbReference type="ChEBI" id="CHEBI:30616"/>
    </ligand>
</feature>
<feature type="binding site" evidence="1">
    <location>
        <position position="391"/>
    </location>
    <ligand>
        <name>ATP</name>
        <dbReference type="ChEBI" id="CHEBI:30616"/>
    </ligand>
</feature>
<protein>
    <recommendedName>
        <fullName evidence="1">ATP-dependent protease ATPase subunit HslU</fullName>
    </recommendedName>
    <alternativeName>
        <fullName evidence="1">Unfoldase HslU</fullName>
    </alternativeName>
</protein>
<comment type="function">
    <text evidence="1">ATPase subunit of a proteasome-like degradation complex; this subunit has chaperone activity. The binding of ATP and its subsequent hydrolysis by HslU are essential for unfolding of protein substrates subsequently hydrolyzed by HslV. HslU recognizes the N-terminal part of its protein substrates and unfolds these before they are guided to HslV for hydrolysis.</text>
</comment>
<comment type="subunit">
    <text evidence="1">A double ring-shaped homohexamer of HslV is capped on each side by a ring-shaped HslU homohexamer. The assembly of the HslU/HslV complex is dependent on binding of ATP.</text>
</comment>
<comment type="subcellular location">
    <subcellularLocation>
        <location evidence="1">Cytoplasm</location>
    </subcellularLocation>
</comment>
<comment type="similarity">
    <text evidence="1">Belongs to the ClpX chaperone family. HslU subfamily.</text>
</comment>
<organism>
    <name type="scientific">Pseudomonas syringae pv. tomato (strain ATCC BAA-871 / DC3000)</name>
    <dbReference type="NCBI Taxonomy" id="223283"/>
    <lineage>
        <taxon>Bacteria</taxon>
        <taxon>Pseudomonadati</taxon>
        <taxon>Pseudomonadota</taxon>
        <taxon>Gammaproteobacteria</taxon>
        <taxon>Pseudomonadales</taxon>
        <taxon>Pseudomonadaceae</taxon>
        <taxon>Pseudomonas</taxon>
    </lineage>
</organism>
<evidence type="ECO:0000255" key="1">
    <source>
        <dbReference type="HAMAP-Rule" id="MF_00249"/>
    </source>
</evidence>
<gene>
    <name evidence="1" type="primary">hslU</name>
    <name type="ordered locus">PSPTO_5141</name>
</gene>
<name>HSLU_PSESM</name>
<reference key="1">
    <citation type="journal article" date="2003" name="Proc. Natl. Acad. Sci. U.S.A.">
        <title>The complete genome sequence of the Arabidopsis and tomato pathogen Pseudomonas syringae pv. tomato DC3000.</title>
        <authorList>
            <person name="Buell C.R."/>
            <person name="Joardar V."/>
            <person name="Lindeberg M."/>
            <person name="Selengut J."/>
            <person name="Paulsen I.T."/>
            <person name="Gwinn M.L."/>
            <person name="Dodson R.J."/>
            <person name="DeBoy R.T."/>
            <person name="Durkin A.S."/>
            <person name="Kolonay J.F."/>
            <person name="Madupu R."/>
            <person name="Daugherty S.C."/>
            <person name="Brinkac L.M."/>
            <person name="Beanan M.J."/>
            <person name="Haft D.H."/>
            <person name="Nelson W.C."/>
            <person name="Davidsen T.M."/>
            <person name="Zafar N."/>
            <person name="Zhou L."/>
            <person name="Liu J."/>
            <person name="Yuan Q."/>
            <person name="Khouri H.M."/>
            <person name="Fedorova N.B."/>
            <person name="Tran B."/>
            <person name="Russell D."/>
            <person name="Berry K.J."/>
            <person name="Utterback T.R."/>
            <person name="Van Aken S.E."/>
            <person name="Feldblyum T.V."/>
            <person name="D'Ascenzo M."/>
            <person name="Deng W.-L."/>
            <person name="Ramos A.R."/>
            <person name="Alfano J.R."/>
            <person name="Cartinhour S."/>
            <person name="Chatterjee A.K."/>
            <person name="Delaney T.P."/>
            <person name="Lazarowitz S.G."/>
            <person name="Martin G.B."/>
            <person name="Schneider D.J."/>
            <person name="Tang X."/>
            <person name="Bender C.L."/>
            <person name="White O."/>
            <person name="Fraser C.M."/>
            <person name="Collmer A."/>
        </authorList>
    </citation>
    <scope>NUCLEOTIDE SEQUENCE [LARGE SCALE GENOMIC DNA]</scope>
    <source>
        <strain>ATCC BAA-871 / DC3000</strain>
    </source>
</reference>
<dbReference type="EMBL" id="AE016853">
    <property type="protein sequence ID" value="AAO58568.1"/>
    <property type="molecule type" value="Genomic_DNA"/>
</dbReference>
<dbReference type="RefSeq" id="NP_794873.1">
    <property type="nucleotide sequence ID" value="NC_004578.1"/>
</dbReference>
<dbReference type="RefSeq" id="WP_005765516.1">
    <property type="nucleotide sequence ID" value="NC_004578.1"/>
</dbReference>
<dbReference type="SMR" id="Q87V00"/>
<dbReference type="STRING" id="223283.PSPTO_5141"/>
<dbReference type="GeneID" id="1186826"/>
<dbReference type="KEGG" id="pst:PSPTO_5141"/>
<dbReference type="PATRIC" id="fig|223283.9.peg.5261"/>
<dbReference type="eggNOG" id="COG1220">
    <property type="taxonomic scope" value="Bacteria"/>
</dbReference>
<dbReference type="HOGENOM" id="CLU_033123_0_0_6"/>
<dbReference type="OrthoDB" id="9804062at2"/>
<dbReference type="PhylomeDB" id="Q87V00"/>
<dbReference type="Proteomes" id="UP000002515">
    <property type="component" value="Chromosome"/>
</dbReference>
<dbReference type="GO" id="GO:0009376">
    <property type="term" value="C:HslUV protease complex"/>
    <property type="evidence" value="ECO:0007669"/>
    <property type="project" value="UniProtKB-UniRule"/>
</dbReference>
<dbReference type="GO" id="GO:0005524">
    <property type="term" value="F:ATP binding"/>
    <property type="evidence" value="ECO:0007669"/>
    <property type="project" value="UniProtKB-UniRule"/>
</dbReference>
<dbReference type="GO" id="GO:0016887">
    <property type="term" value="F:ATP hydrolysis activity"/>
    <property type="evidence" value="ECO:0007669"/>
    <property type="project" value="InterPro"/>
</dbReference>
<dbReference type="GO" id="GO:0008233">
    <property type="term" value="F:peptidase activity"/>
    <property type="evidence" value="ECO:0007669"/>
    <property type="project" value="InterPro"/>
</dbReference>
<dbReference type="GO" id="GO:0036402">
    <property type="term" value="F:proteasome-activating activity"/>
    <property type="evidence" value="ECO:0007669"/>
    <property type="project" value="UniProtKB-UniRule"/>
</dbReference>
<dbReference type="GO" id="GO:0043335">
    <property type="term" value="P:protein unfolding"/>
    <property type="evidence" value="ECO:0007669"/>
    <property type="project" value="UniProtKB-UniRule"/>
</dbReference>
<dbReference type="GO" id="GO:0051603">
    <property type="term" value="P:proteolysis involved in protein catabolic process"/>
    <property type="evidence" value="ECO:0007669"/>
    <property type="project" value="TreeGrafter"/>
</dbReference>
<dbReference type="CDD" id="cd19498">
    <property type="entry name" value="RecA-like_HslU"/>
    <property type="match status" value="1"/>
</dbReference>
<dbReference type="FunFam" id="1.10.8.10:FF:000028">
    <property type="entry name" value="ATP-dependent protease ATPase subunit HslU"/>
    <property type="match status" value="1"/>
</dbReference>
<dbReference type="FunFam" id="3.40.50.300:FF:000213">
    <property type="entry name" value="ATP-dependent protease ATPase subunit HslU"/>
    <property type="match status" value="1"/>
</dbReference>
<dbReference type="FunFam" id="3.40.50.300:FF:000220">
    <property type="entry name" value="ATP-dependent protease ATPase subunit HslU"/>
    <property type="match status" value="1"/>
</dbReference>
<dbReference type="Gene3D" id="1.10.8.60">
    <property type="match status" value="1"/>
</dbReference>
<dbReference type="Gene3D" id="1.10.8.10">
    <property type="entry name" value="DNA helicase RuvA subunit, C-terminal domain"/>
    <property type="match status" value="1"/>
</dbReference>
<dbReference type="Gene3D" id="3.40.50.300">
    <property type="entry name" value="P-loop containing nucleotide triphosphate hydrolases"/>
    <property type="match status" value="2"/>
</dbReference>
<dbReference type="HAMAP" id="MF_00249">
    <property type="entry name" value="HslU"/>
    <property type="match status" value="1"/>
</dbReference>
<dbReference type="InterPro" id="IPR003593">
    <property type="entry name" value="AAA+_ATPase"/>
</dbReference>
<dbReference type="InterPro" id="IPR050052">
    <property type="entry name" value="ATP-dep_Clp_protease_ClpX"/>
</dbReference>
<dbReference type="InterPro" id="IPR003959">
    <property type="entry name" value="ATPase_AAA_core"/>
</dbReference>
<dbReference type="InterPro" id="IPR019489">
    <property type="entry name" value="Clp_ATPase_C"/>
</dbReference>
<dbReference type="InterPro" id="IPR004491">
    <property type="entry name" value="HslU"/>
</dbReference>
<dbReference type="InterPro" id="IPR027417">
    <property type="entry name" value="P-loop_NTPase"/>
</dbReference>
<dbReference type="NCBIfam" id="TIGR00390">
    <property type="entry name" value="hslU"/>
    <property type="match status" value="1"/>
</dbReference>
<dbReference type="NCBIfam" id="NF003544">
    <property type="entry name" value="PRK05201.1"/>
    <property type="match status" value="1"/>
</dbReference>
<dbReference type="PANTHER" id="PTHR48102">
    <property type="entry name" value="ATP-DEPENDENT CLP PROTEASE ATP-BINDING SUBUNIT CLPX-LIKE, MITOCHONDRIAL-RELATED"/>
    <property type="match status" value="1"/>
</dbReference>
<dbReference type="PANTHER" id="PTHR48102:SF3">
    <property type="entry name" value="ATP-DEPENDENT PROTEASE ATPASE SUBUNIT HSLU"/>
    <property type="match status" value="1"/>
</dbReference>
<dbReference type="Pfam" id="PF00004">
    <property type="entry name" value="AAA"/>
    <property type="match status" value="1"/>
</dbReference>
<dbReference type="Pfam" id="PF07724">
    <property type="entry name" value="AAA_2"/>
    <property type="match status" value="1"/>
</dbReference>
<dbReference type="SMART" id="SM00382">
    <property type="entry name" value="AAA"/>
    <property type="match status" value="1"/>
</dbReference>
<dbReference type="SMART" id="SM01086">
    <property type="entry name" value="ClpB_D2-small"/>
    <property type="match status" value="1"/>
</dbReference>
<dbReference type="SUPFAM" id="SSF52540">
    <property type="entry name" value="P-loop containing nucleoside triphosphate hydrolases"/>
    <property type="match status" value="1"/>
</dbReference>
<proteinExistence type="inferred from homology"/>